<gene>
    <name evidence="1" type="primary">petM</name>
    <name type="ordered locus">P9303_08501</name>
</gene>
<sequence length="32" mass="3271">MASEIFGIAAVFWVLIPVGLAGGALLLKLQGD</sequence>
<organism>
    <name type="scientific">Prochlorococcus marinus (strain MIT 9303)</name>
    <dbReference type="NCBI Taxonomy" id="59922"/>
    <lineage>
        <taxon>Bacteria</taxon>
        <taxon>Bacillati</taxon>
        <taxon>Cyanobacteriota</taxon>
        <taxon>Cyanophyceae</taxon>
        <taxon>Synechococcales</taxon>
        <taxon>Prochlorococcaceae</taxon>
        <taxon>Prochlorococcus</taxon>
    </lineage>
</organism>
<protein>
    <recommendedName>
        <fullName evidence="1">Cytochrome b6-f complex subunit 7</fullName>
    </recommendedName>
    <alternativeName>
        <fullName evidence="1">Cytochrome b6-f complex subunit PetM</fullName>
    </alternativeName>
    <alternativeName>
        <fullName evidence="1">Cytochrome b6-f complex subunit VII</fullName>
    </alternativeName>
</protein>
<feature type="chain" id="PRO_1000049586" description="Cytochrome b6-f complex subunit 7">
    <location>
        <begin position="1"/>
        <end position="32"/>
    </location>
</feature>
<feature type="transmembrane region" description="Helical" evidence="1">
    <location>
        <begin position="9"/>
        <end position="27"/>
    </location>
</feature>
<accession>A2C7Z1</accession>
<proteinExistence type="inferred from homology"/>
<reference key="1">
    <citation type="journal article" date="2007" name="PLoS Genet.">
        <title>Patterns and implications of gene gain and loss in the evolution of Prochlorococcus.</title>
        <authorList>
            <person name="Kettler G.C."/>
            <person name="Martiny A.C."/>
            <person name="Huang K."/>
            <person name="Zucker J."/>
            <person name="Coleman M.L."/>
            <person name="Rodrigue S."/>
            <person name="Chen F."/>
            <person name="Lapidus A."/>
            <person name="Ferriera S."/>
            <person name="Johnson J."/>
            <person name="Steglich C."/>
            <person name="Church G.M."/>
            <person name="Richardson P."/>
            <person name="Chisholm S.W."/>
        </authorList>
    </citation>
    <scope>NUCLEOTIDE SEQUENCE [LARGE SCALE GENOMIC DNA]</scope>
    <source>
        <strain>MIT 9303</strain>
    </source>
</reference>
<name>PETM_PROM3</name>
<comment type="function">
    <text evidence="1">Component of the cytochrome b6-f complex, which mediates electron transfer between photosystem II (PSII) and photosystem I (PSI), cyclic electron flow around PSI, and state transitions.</text>
</comment>
<comment type="subunit">
    <text evidence="1">The 4 large subunits of the cytochrome b6-f complex are cytochrome b6, subunit IV (17 kDa polypeptide, PetD), cytochrome f and the Rieske protein, while the 4 small subunits are PetG, PetL, PetM and PetN. The complex functions as a dimer.</text>
</comment>
<comment type="subcellular location">
    <subcellularLocation>
        <location evidence="1">Cellular thylakoid membrane</location>
        <topology evidence="1">Single-pass membrane protein</topology>
    </subcellularLocation>
</comment>
<comment type="similarity">
    <text evidence="1">Belongs to the PetM family.</text>
</comment>
<dbReference type="EMBL" id="CP000554">
    <property type="protein sequence ID" value="ABM77601.1"/>
    <property type="molecule type" value="Genomic_DNA"/>
</dbReference>
<dbReference type="RefSeq" id="WP_011130544.1">
    <property type="nucleotide sequence ID" value="NC_008820.1"/>
</dbReference>
<dbReference type="SMR" id="A2C7Z1"/>
<dbReference type="STRING" id="59922.P9303_08501"/>
<dbReference type="KEGG" id="pmf:P9303_08501"/>
<dbReference type="HOGENOM" id="CLU_216743_1_0_3"/>
<dbReference type="BioCyc" id="PMAR59922:G1G80-765-MONOMER"/>
<dbReference type="Proteomes" id="UP000002274">
    <property type="component" value="Chromosome"/>
</dbReference>
<dbReference type="GO" id="GO:0009512">
    <property type="term" value="C:cytochrome b6f complex"/>
    <property type="evidence" value="ECO:0007669"/>
    <property type="project" value="InterPro"/>
</dbReference>
<dbReference type="GO" id="GO:0031676">
    <property type="term" value="C:plasma membrane-derived thylakoid membrane"/>
    <property type="evidence" value="ECO:0007669"/>
    <property type="project" value="UniProtKB-SubCell"/>
</dbReference>
<dbReference type="GO" id="GO:0009055">
    <property type="term" value="F:electron transfer activity"/>
    <property type="evidence" value="ECO:0007669"/>
    <property type="project" value="UniProtKB-UniRule"/>
</dbReference>
<dbReference type="GO" id="GO:0015979">
    <property type="term" value="P:photosynthesis"/>
    <property type="evidence" value="ECO:0007669"/>
    <property type="project" value="UniProtKB-KW"/>
</dbReference>
<dbReference type="HAMAP" id="MF_00396">
    <property type="entry name" value="Cytb6_f_PetM"/>
    <property type="match status" value="1"/>
</dbReference>
<dbReference type="InterPro" id="IPR012595">
    <property type="entry name" value="PetM_cyt_b6/f_cplx_su7"/>
</dbReference>
<dbReference type="NCBIfam" id="NF008826">
    <property type="entry name" value="PRK11876.1-2"/>
    <property type="match status" value="1"/>
</dbReference>
<dbReference type="Pfam" id="PF08041">
    <property type="entry name" value="PetM"/>
    <property type="match status" value="1"/>
</dbReference>
<evidence type="ECO:0000255" key="1">
    <source>
        <dbReference type="HAMAP-Rule" id="MF_00396"/>
    </source>
</evidence>
<keyword id="KW-0249">Electron transport</keyword>
<keyword id="KW-0472">Membrane</keyword>
<keyword id="KW-0602">Photosynthesis</keyword>
<keyword id="KW-0793">Thylakoid</keyword>
<keyword id="KW-0812">Transmembrane</keyword>
<keyword id="KW-1133">Transmembrane helix</keyword>
<keyword id="KW-0813">Transport</keyword>